<organism>
    <name type="scientific">Oncorhynchus mykiss</name>
    <name type="common">Rainbow trout</name>
    <name type="synonym">Salmo gairdneri</name>
    <dbReference type="NCBI Taxonomy" id="8022"/>
    <lineage>
        <taxon>Eukaryota</taxon>
        <taxon>Metazoa</taxon>
        <taxon>Chordata</taxon>
        <taxon>Craniata</taxon>
        <taxon>Vertebrata</taxon>
        <taxon>Euteleostomi</taxon>
        <taxon>Actinopterygii</taxon>
        <taxon>Neopterygii</taxon>
        <taxon>Teleostei</taxon>
        <taxon>Protacanthopterygii</taxon>
        <taxon>Salmoniformes</taxon>
        <taxon>Salmonidae</taxon>
        <taxon>Salmoninae</taxon>
        <taxon>Oncorhynchus</taxon>
    </lineage>
</organism>
<reference key="1">
    <citation type="journal article" date="1986" name="Proc. Natl. Acad. Sci. U.S.A.">
        <title>Cellular myc (c-myc) in fish (rainbow trout): its relationship to other vertebrate myc genes and to the transforming genes of the MC29 family of viruses.</title>
        <authorList>
            <person name="van Beneden R.J."/>
            <person name="Watson D.K."/>
            <person name="Chen T.T."/>
            <person name="Lautenberger J.A."/>
            <person name="Papas T.S."/>
        </authorList>
    </citation>
    <scope>NUCLEOTIDE SEQUENCE [GENOMIC DNA]</scope>
</reference>
<gene>
    <name type="primary">myc</name>
</gene>
<sequence length="414" mass="46643">NSSLASKNYDYDYDSIQPYFYVDNEDEDFYHQQPGQLQPPAPSEDIWKKFELLPTPPLSPSRPSLSSIFPSTADQLEMVTEFLGDDVVNQSFICDADYSQTFLKSIIIQDCMWSGFSATAKLEKVVSERLASLQTARKDSAVGDNAECPTRLNANYLQDPNTSASECIGPNTSASECIGPSVVFPYPITETPKPSKVAPPTDLALDTPPNSGSSSSSGSDSEDDDEEEDDEDEEEIDVVTVEKRQAVKRCDPSTSETRHHSPLVLKRCHVSTHQHNYAAHPSTRHEQPAVKRLRLENSSSRVLKQISSNRKCSSPRTSDTEDYDKRRTHNVLERQRRNELKLSFFALRDEIPDVANNEKAAKVVILKKATECIYSMQTDEQRLVNLKEQLRRKSEHLKQKLAQLQNSCLSSKRH</sequence>
<proteinExistence type="inferred from homology"/>
<evidence type="ECO:0000250" key="1"/>
<evidence type="ECO:0000250" key="2">
    <source>
        <dbReference type="UniProtKB" id="P01106"/>
    </source>
</evidence>
<evidence type="ECO:0000255" key="3">
    <source>
        <dbReference type="PROSITE-ProRule" id="PRU00981"/>
    </source>
</evidence>
<evidence type="ECO:0000256" key="4">
    <source>
        <dbReference type="SAM" id="MobiDB-lite"/>
    </source>
</evidence>
<dbReference type="EMBL" id="M13048">
    <property type="protein sequence ID" value="AAA49604.1"/>
    <property type="molecule type" value="Genomic_DNA"/>
</dbReference>
<dbReference type="PIR" id="A25272">
    <property type="entry name" value="TVTRMC"/>
</dbReference>
<dbReference type="SMR" id="P06646"/>
<dbReference type="Proteomes" id="UP000694395">
    <property type="component" value="Unplaced"/>
</dbReference>
<dbReference type="GO" id="GO:0005634">
    <property type="term" value="C:nucleus"/>
    <property type="evidence" value="ECO:0007669"/>
    <property type="project" value="UniProtKB-SubCell"/>
</dbReference>
<dbReference type="GO" id="GO:0048471">
    <property type="term" value="C:perinuclear region of cytoplasm"/>
    <property type="evidence" value="ECO:0000314"/>
    <property type="project" value="AgBase"/>
</dbReference>
<dbReference type="GO" id="GO:0003677">
    <property type="term" value="F:DNA binding"/>
    <property type="evidence" value="ECO:0007669"/>
    <property type="project" value="UniProtKB-KW"/>
</dbReference>
<dbReference type="GO" id="GO:0000981">
    <property type="term" value="F:DNA-binding transcription factor activity, RNA polymerase II-specific"/>
    <property type="evidence" value="ECO:0000250"/>
    <property type="project" value="UniProtKB"/>
</dbReference>
<dbReference type="GO" id="GO:0046983">
    <property type="term" value="F:protein dimerization activity"/>
    <property type="evidence" value="ECO:0007669"/>
    <property type="project" value="InterPro"/>
</dbReference>
<dbReference type="CDD" id="cd11458">
    <property type="entry name" value="bHLHzip_c-Myc"/>
    <property type="match status" value="1"/>
</dbReference>
<dbReference type="FunFam" id="4.10.280.10:FF:000019">
    <property type="entry name" value="Myc proto-oncogene protein"/>
    <property type="match status" value="1"/>
</dbReference>
<dbReference type="Gene3D" id="4.10.280.10">
    <property type="entry name" value="Helix-loop-helix DNA-binding domain"/>
    <property type="match status" value="1"/>
</dbReference>
<dbReference type="InterPro" id="IPR011598">
    <property type="entry name" value="bHLH_dom"/>
</dbReference>
<dbReference type="InterPro" id="IPR036638">
    <property type="entry name" value="HLH_DNA-bd_sf"/>
</dbReference>
<dbReference type="InterPro" id="IPR003327">
    <property type="entry name" value="Myc-LZ"/>
</dbReference>
<dbReference type="InterPro" id="IPR050433">
    <property type="entry name" value="Myc_transcription_factors"/>
</dbReference>
<dbReference type="InterPro" id="IPR002418">
    <property type="entry name" value="Tscrpt_reg_Myc"/>
</dbReference>
<dbReference type="InterPro" id="IPR012682">
    <property type="entry name" value="Tscrpt_reg_Myc_N"/>
</dbReference>
<dbReference type="PANTHER" id="PTHR45851">
    <property type="entry name" value="MYC PROTO-ONCOGENE"/>
    <property type="match status" value="1"/>
</dbReference>
<dbReference type="Pfam" id="PF00010">
    <property type="entry name" value="HLH"/>
    <property type="match status" value="1"/>
</dbReference>
<dbReference type="Pfam" id="PF02344">
    <property type="entry name" value="Myc-LZ"/>
    <property type="match status" value="1"/>
</dbReference>
<dbReference type="Pfam" id="PF01056">
    <property type="entry name" value="Myc_N"/>
    <property type="match status" value="1"/>
</dbReference>
<dbReference type="PIRSF" id="PIRSF001705">
    <property type="entry name" value="Myc_protein"/>
    <property type="match status" value="1"/>
</dbReference>
<dbReference type="PRINTS" id="PR00044">
    <property type="entry name" value="LEUZIPPRMYC"/>
</dbReference>
<dbReference type="SMART" id="SM00353">
    <property type="entry name" value="HLH"/>
    <property type="match status" value="1"/>
</dbReference>
<dbReference type="SUPFAM" id="SSF47459">
    <property type="entry name" value="HLH, helix-loop-helix DNA-binding domain"/>
    <property type="match status" value="1"/>
</dbReference>
<dbReference type="PROSITE" id="PS50888">
    <property type="entry name" value="BHLH"/>
    <property type="match status" value="1"/>
</dbReference>
<comment type="function">
    <text evidence="2">Transcription factor that binds DNA in a non-specific manner, yet also specifically recognizes the core sequence 5'-CAC[GA]TG-3'. Activates the transcription of growth-related genes.</text>
</comment>
<comment type="subunit">
    <text evidence="1">Efficient DNA binding requires dimerization with another bHLH protein. Binds DNA as a heterodimer with MAX (By similarity).</text>
</comment>
<comment type="subcellular location">
    <subcellularLocation>
        <location>Nucleus</location>
    </subcellularLocation>
</comment>
<comment type="domain">
    <text evidence="2">The 9aaTAD motif is a transactivation domain present in a large number of yeast and animal transcription factors.</text>
</comment>
<name>MYC_ONCMY</name>
<protein>
    <recommendedName>
        <fullName>Transcriptional regulator Myc</fullName>
        <shortName>c-Myc</shortName>
    </recommendedName>
</protein>
<accession>P06646</accession>
<keyword id="KW-0010">Activator</keyword>
<keyword id="KW-0238">DNA-binding</keyword>
<keyword id="KW-0539">Nucleus</keyword>
<keyword id="KW-0804">Transcription</keyword>
<keyword id="KW-0805">Transcription regulation</keyword>
<feature type="chain" id="PRO_0000127318" description="Transcriptional regulator Myc">
    <location>
        <begin position="1" status="less than"/>
        <end position="414"/>
    </location>
</feature>
<feature type="domain" description="bHLH" evidence="3">
    <location>
        <begin position="324"/>
        <end position="376"/>
    </location>
</feature>
<feature type="region of interest" description="Disordered" evidence="4">
    <location>
        <begin position="192"/>
        <end position="263"/>
    </location>
</feature>
<feature type="region of interest" description="Disordered" evidence="4">
    <location>
        <begin position="296"/>
        <end position="330"/>
    </location>
</feature>
<feature type="region of interest" description="Leucine-zipper">
    <location>
        <begin position="383"/>
        <end position="404"/>
    </location>
</feature>
<feature type="short sequence motif" description="9aaTAD" evidence="2">
    <location>
        <begin position="77"/>
        <end position="85"/>
    </location>
</feature>
<feature type="compositionally biased region" description="Acidic residues" evidence="4">
    <location>
        <begin position="220"/>
        <end position="237"/>
    </location>
</feature>
<feature type="compositionally biased region" description="Basic and acidic residues" evidence="4">
    <location>
        <begin position="240"/>
        <end position="259"/>
    </location>
</feature>
<feature type="compositionally biased region" description="Polar residues" evidence="4">
    <location>
        <begin position="296"/>
        <end position="317"/>
    </location>
</feature>
<feature type="non-terminal residue">
    <location>
        <position position="1"/>
    </location>
</feature>